<feature type="chain" id="PRO_0000098126" description="HTH-type transcriptional regulator HmrR">
    <location>
        <begin position="1"/>
        <end position="147"/>
    </location>
</feature>
<feature type="domain" description="HTH merR-type" evidence="1">
    <location>
        <begin position="1"/>
        <end position="69"/>
    </location>
</feature>
<feature type="DNA-binding region" description="H-T-H motif" evidence="1">
    <location>
        <begin position="4"/>
        <end position="23"/>
    </location>
</feature>
<protein>
    <recommendedName>
        <fullName>HTH-type transcriptional regulator HmrR</fullName>
    </recommendedName>
    <alternativeName>
        <fullName>Copper efflux regulator</fullName>
    </alternativeName>
    <alternativeName>
        <fullName>Copper export regulator</fullName>
    </alternativeName>
</protein>
<proteinExistence type="evidence at protein level"/>
<gene>
    <name type="primary">hmrR</name>
    <name type="ordered locus">Smed_4898</name>
</gene>
<comment type="function">
    <text evidence="2">Regulates the transcription of actP. It detects cytoplasmic copper stress and activates transcription in response to increasing copper concentrations. In the absence of copper, it negatively regulates the transcription of actP.</text>
</comment>
<comment type="subunit">
    <text evidence="3">Homodimer.</text>
</comment>
<comment type="subcellular location">
    <subcellularLocation>
        <location evidence="3">Cytoplasm</location>
    </subcellularLocation>
</comment>
<dbReference type="EMBL" id="AF129004">
    <property type="protein sequence ID" value="AAD27640.1"/>
    <property type="molecule type" value="Genomic_DNA"/>
</dbReference>
<dbReference type="EMBL" id="CP000739">
    <property type="protein sequence ID" value="ABR63682.1"/>
    <property type="molecule type" value="Genomic_DNA"/>
</dbReference>
<dbReference type="RefSeq" id="YP_001313615.1">
    <property type="nucleotide sequence ID" value="NC_009620.1"/>
</dbReference>
<dbReference type="SMR" id="Q9X5X4"/>
<dbReference type="KEGG" id="smd:Smed_4898"/>
<dbReference type="PATRIC" id="fig|366394.8.peg.1376"/>
<dbReference type="HOGENOM" id="CLU_060077_2_0_5"/>
<dbReference type="OrthoDB" id="9802944at2"/>
<dbReference type="Proteomes" id="UP000001108">
    <property type="component" value="Plasmid pSMED01"/>
</dbReference>
<dbReference type="GO" id="GO:0005737">
    <property type="term" value="C:cytoplasm"/>
    <property type="evidence" value="ECO:0007669"/>
    <property type="project" value="UniProtKB-SubCell"/>
</dbReference>
<dbReference type="GO" id="GO:0005507">
    <property type="term" value="F:copper ion binding"/>
    <property type="evidence" value="ECO:0007669"/>
    <property type="project" value="InterPro"/>
</dbReference>
<dbReference type="GO" id="GO:0003677">
    <property type="term" value="F:DNA binding"/>
    <property type="evidence" value="ECO:0007669"/>
    <property type="project" value="UniProtKB-KW"/>
</dbReference>
<dbReference type="GO" id="GO:0003700">
    <property type="term" value="F:DNA-binding transcription factor activity"/>
    <property type="evidence" value="ECO:0007669"/>
    <property type="project" value="InterPro"/>
</dbReference>
<dbReference type="GO" id="GO:0045893">
    <property type="term" value="P:positive regulation of DNA-templated transcription"/>
    <property type="evidence" value="ECO:0007669"/>
    <property type="project" value="InterPro"/>
</dbReference>
<dbReference type="CDD" id="cd01108">
    <property type="entry name" value="HTH_CueR"/>
    <property type="match status" value="1"/>
</dbReference>
<dbReference type="Gene3D" id="1.10.1660.10">
    <property type="match status" value="1"/>
</dbReference>
<dbReference type="InterPro" id="IPR011789">
    <property type="entry name" value="CueR"/>
</dbReference>
<dbReference type="InterPro" id="IPR009061">
    <property type="entry name" value="DNA-bd_dom_put_sf"/>
</dbReference>
<dbReference type="InterPro" id="IPR000551">
    <property type="entry name" value="MerR-type_HTH_dom"/>
</dbReference>
<dbReference type="InterPro" id="IPR047057">
    <property type="entry name" value="MerR_fam"/>
</dbReference>
<dbReference type="InterPro" id="IPR015358">
    <property type="entry name" value="Tscrpt_reg_MerR_DNA-bd"/>
</dbReference>
<dbReference type="NCBIfam" id="TIGR02044">
    <property type="entry name" value="CueR"/>
    <property type="match status" value="1"/>
</dbReference>
<dbReference type="PANTHER" id="PTHR30204:SF94">
    <property type="entry name" value="HEAVY METAL-DEPENDENT TRANSCRIPTIONAL REGULATOR HI_0293-RELATED"/>
    <property type="match status" value="1"/>
</dbReference>
<dbReference type="PANTHER" id="PTHR30204">
    <property type="entry name" value="REDOX-CYCLING DRUG-SENSING TRANSCRIPTIONAL ACTIVATOR SOXR"/>
    <property type="match status" value="1"/>
</dbReference>
<dbReference type="Pfam" id="PF00376">
    <property type="entry name" value="MerR"/>
    <property type="match status" value="1"/>
</dbReference>
<dbReference type="Pfam" id="PF09278">
    <property type="entry name" value="MerR-DNA-bind"/>
    <property type="match status" value="1"/>
</dbReference>
<dbReference type="PRINTS" id="PR00040">
    <property type="entry name" value="HTHMERR"/>
</dbReference>
<dbReference type="SMART" id="SM00422">
    <property type="entry name" value="HTH_MERR"/>
    <property type="match status" value="1"/>
</dbReference>
<dbReference type="SUPFAM" id="SSF46955">
    <property type="entry name" value="Putative DNA-binding domain"/>
    <property type="match status" value="1"/>
</dbReference>
<dbReference type="PROSITE" id="PS00552">
    <property type="entry name" value="HTH_MERR_1"/>
    <property type="match status" value="1"/>
</dbReference>
<dbReference type="PROSITE" id="PS50937">
    <property type="entry name" value="HTH_MERR_2"/>
    <property type="match status" value="1"/>
</dbReference>
<keyword id="KW-0010">Activator</keyword>
<keyword id="KW-0186">Copper</keyword>
<keyword id="KW-0963">Cytoplasm</keyword>
<keyword id="KW-0238">DNA-binding</keyword>
<keyword id="KW-0614">Plasmid</keyword>
<keyword id="KW-0678">Repressor</keyword>
<keyword id="KW-0804">Transcription</keyword>
<keyword id="KW-0805">Transcription regulation</keyword>
<geneLocation type="plasmid">
    <name>pSMED01</name>
</geneLocation>
<accession>Q9X5X4</accession>
<accession>A6UJ52</accession>
<evidence type="ECO:0000255" key="1">
    <source>
        <dbReference type="PROSITE-ProRule" id="PRU00254"/>
    </source>
</evidence>
<evidence type="ECO:0000269" key="2">
    <source>
    </source>
</evidence>
<evidence type="ECO:0000305" key="3"/>
<name>HMRR_SINMW</name>
<organism>
    <name type="scientific">Sinorhizobium medicae (strain WSM419)</name>
    <name type="common">Ensifer medicae</name>
    <dbReference type="NCBI Taxonomy" id="366394"/>
    <lineage>
        <taxon>Bacteria</taxon>
        <taxon>Pseudomonadati</taxon>
        <taxon>Pseudomonadota</taxon>
        <taxon>Alphaproteobacteria</taxon>
        <taxon>Hyphomicrobiales</taxon>
        <taxon>Rhizobiaceae</taxon>
        <taxon>Sinorhizobium/Ensifer group</taxon>
        <taxon>Sinorhizobium</taxon>
    </lineage>
</organism>
<sequence length="147" mass="16282">MNIGEASKVSGVSSKMIRYYEQIGLISPAVRTASSYRTYGDNDVHTLRFIRRARDLGFSVEQIKELLALWRDRSRASSDVKAVALEHIAELERKIAAIQDMTRTLKHLASHCHGDGRPDCPIIEEMAKGGGAAKTEINPRFGVASLK</sequence>
<reference key="1">
    <citation type="journal article" date="2002" name="Mol. Microbiol.">
        <title>ActP controls copper homeostasis in Rhizobium leguminosarum bv. viciae and Sinorhizobium meliloti preventing low pH-induced copper toxicity.</title>
        <authorList>
            <person name="Reeve W.G."/>
            <person name="Tiwari R.P."/>
            <person name="Kale N.B."/>
            <person name="Dilworth M.J."/>
            <person name="Glenn A.R."/>
        </authorList>
    </citation>
    <scope>NUCLEOTIDE SEQUENCE [GENOMIC DNA]</scope>
    <scope>FUNCTION AS TRANSCRIPTIONAL REGULATOR</scope>
</reference>
<reference key="2">
    <citation type="submission" date="2007-06" db="EMBL/GenBank/DDBJ databases">
        <title>Complete sequence of Sinorhizobium medicae WSM419 plasmid pSMED01.</title>
        <authorList>
            <consortium name="US DOE Joint Genome Institute"/>
            <person name="Copeland A."/>
            <person name="Lucas S."/>
            <person name="Lapidus A."/>
            <person name="Barry K."/>
            <person name="Glavina del Rio T."/>
            <person name="Dalin E."/>
            <person name="Tice H."/>
            <person name="Pitluck S."/>
            <person name="Chain P."/>
            <person name="Malfatti S."/>
            <person name="Shin M."/>
            <person name="Vergez L."/>
            <person name="Schmutz J."/>
            <person name="Larimer F."/>
            <person name="Land M."/>
            <person name="Hauser L."/>
            <person name="Kyrpides N."/>
            <person name="Mikhailova N."/>
            <person name="Reeve W.G."/>
            <person name="Richardson P."/>
        </authorList>
    </citation>
    <scope>NUCLEOTIDE SEQUENCE [LARGE SCALE GENOMIC DNA]</scope>
    <source>
        <strain>WSM419</strain>
    </source>
</reference>